<proteinExistence type="inferred from homology"/>
<protein>
    <recommendedName>
        <fullName evidence="1">Ribosomal protein L11 methyltransferase</fullName>
        <shortName evidence="1">L11 Mtase</shortName>
        <ecNumber evidence="1">2.1.1.-</ecNumber>
    </recommendedName>
</protein>
<comment type="function">
    <text evidence="1">Methylates ribosomal protein L11.</text>
</comment>
<comment type="catalytic activity">
    <reaction evidence="1">
        <text>L-lysyl-[protein] + 3 S-adenosyl-L-methionine = N(6),N(6),N(6)-trimethyl-L-lysyl-[protein] + 3 S-adenosyl-L-homocysteine + 3 H(+)</text>
        <dbReference type="Rhea" id="RHEA:54192"/>
        <dbReference type="Rhea" id="RHEA-COMP:9752"/>
        <dbReference type="Rhea" id="RHEA-COMP:13826"/>
        <dbReference type="ChEBI" id="CHEBI:15378"/>
        <dbReference type="ChEBI" id="CHEBI:29969"/>
        <dbReference type="ChEBI" id="CHEBI:57856"/>
        <dbReference type="ChEBI" id="CHEBI:59789"/>
        <dbReference type="ChEBI" id="CHEBI:61961"/>
    </reaction>
</comment>
<comment type="subcellular location">
    <subcellularLocation>
        <location evidence="1">Cytoplasm</location>
    </subcellularLocation>
</comment>
<comment type="similarity">
    <text evidence="1">Belongs to the methyltransferase superfamily. PrmA family.</text>
</comment>
<sequence>MPYQQITVNVNDAVAERLADALMEHGALSAAIEDAYAGTQNEQAIFGEPGMPAEQIWQQSKVIALFGEHDEAAAIIQTATQECGLKDLAYTGETIEDQDWVRLTQSQFDPIRISDRLWITPSWHEVPEGSAVNLRLDPGLAFGTGSHPTTRLCLKWLDTQLKNGESVLDYGCGSGILTIAALKLGAGFAVGVDIDEQAVRAGKDNAAQNNVDAQFFLPDGLPQGQFDVVVANILANPLRMLGEMLAARTKQGGRIVLSGLLDEQAEELGGIYSQWFDLDPAETEEGWARLSGVKR</sequence>
<organism>
    <name type="scientific">Neisseria meningitidis serogroup B (strain ATCC BAA-335 / MC58)</name>
    <dbReference type="NCBI Taxonomy" id="122586"/>
    <lineage>
        <taxon>Bacteria</taxon>
        <taxon>Pseudomonadati</taxon>
        <taxon>Pseudomonadota</taxon>
        <taxon>Betaproteobacteria</taxon>
        <taxon>Neisseriales</taxon>
        <taxon>Neisseriaceae</taxon>
        <taxon>Neisseria</taxon>
    </lineage>
</organism>
<evidence type="ECO:0000255" key="1">
    <source>
        <dbReference type="HAMAP-Rule" id="MF_00735"/>
    </source>
</evidence>
<dbReference type="EC" id="2.1.1.-" evidence="1"/>
<dbReference type="EMBL" id="AE002098">
    <property type="protein sequence ID" value="AAF42196.1"/>
    <property type="molecule type" value="Genomic_DNA"/>
</dbReference>
<dbReference type="PIR" id="G81033">
    <property type="entry name" value="G81033"/>
</dbReference>
<dbReference type="RefSeq" id="NP_274858.1">
    <property type="nucleotide sequence ID" value="NC_003112.2"/>
</dbReference>
<dbReference type="RefSeq" id="WP_002223022.1">
    <property type="nucleotide sequence ID" value="NC_003112.2"/>
</dbReference>
<dbReference type="SMR" id="Q9JXW2"/>
<dbReference type="FunCoup" id="Q9JXW2">
    <property type="interactions" value="417"/>
</dbReference>
<dbReference type="STRING" id="122586.NMB1862"/>
<dbReference type="PaxDb" id="122586-NMB1862"/>
<dbReference type="KEGG" id="nme:NMB1862"/>
<dbReference type="PATRIC" id="fig|122586.8.peg.2380"/>
<dbReference type="HOGENOM" id="CLU_049382_4_1_4"/>
<dbReference type="InParanoid" id="Q9JXW2"/>
<dbReference type="OrthoDB" id="9785995at2"/>
<dbReference type="Proteomes" id="UP000000425">
    <property type="component" value="Chromosome"/>
</dbReference>
<dbReference type="GO" id="GO:0005829">
    <property type="term" value="C:cytosol"/>
    <property type="evidence" value="ECO:0000318"/>
    <property type="project" value="GO_Central"/>
</dbReference>
<dbReference type="GO" id="GO:0016279">
    <property type="term" value="F:protein-lysine N-methyltransferase activity"/>
    <property type="evidence" value="ECO:0000318"/>
    <property type="project" value="GO_Central"/>
</dbReference>
<dbReference type="GO" id="GO:0032259">
    <property type="term" value="P:methylation"/>
    <property type="evidence" value="ECO:0007669"/>
    <property type="project" value="UniProtKB-KW"/>
</dbReference>
<dbReference type="CDD" id="cd02440">
    <property type="entry name" value="AdoMet_MTases"/>
    <property type="match status" value="1"/>
</dbReference>
<dbReference type="Gene3D" id="3.40.50.150">
    <property type="entry name" value="Vaccinia Virus protein VP39"/>
    <property type="match status" value="1"/>
</dbReference>
<dbReference type="HAMAP" id="MF_00735">
    <property type="entry name" value="Methyltr_PrmA"/>
    <property type="match status" value="1"/>
</dbReference>
<dbReference type="InterPro" id="IPR050078">
    <property type="entry name" value="Ribosomal_L11_MeTrfase_PrmA"/>
</dbReference>
<dbReference type="InterPro" id="IPR004498">
    <property type="entry name" value="Ribosomal_PrmA_MeTrfase"/>
</dbReference>
<dbReference type="InterPro" id="IPR029063">
    <property type="entry name" value="SAM-dependent_MTases_sf"/>
</dbReference>
<dbReference type="NCBIfam" id="TIGR00406">
    <property type="entry name" value="prmA"/>
    <property type="match status" value="1"/>
</dbReference>
<dbReference type="PANTHER" id="PTHR43648">
    <property type="entry name" value="ELECTRON TRANSFER FLAVOPROTEIN BETA SUBUNIT LYSINE METHYLTRANSFERASE"/>
    <property type="match status" value="1"/>
</dbReference>
<dbReference type="PANTHER" id="PTHR43648:SF1">
    <property type="entry name" value="ELECTRON TRANSFER FLAVOPROTEIN BETA SUBUNIT LYSINE METHYLTRANSFERASE"/>
    <property type="match status" value="1"/>
</dbReference>
<dbReference type="Pfam" id="PF06325">
    <property type="entry name" value="PrmA"/>
    <property type="match status" value="1"/>
</dbReference>
<dbReference type="PIRSF" id="PIRSF000401">
    <property type="entry name" value="RPL11_MTase"/>
    <property type="match status" value="1"/>
</dbReference>
<dbReference type="SUPFAM" id="SSF53335">
    <property type="entry name" value="S-adenosyl-L-methionine-dependent methyltransferases"/>
    <property type="match status" value="1"/>
</dbReference>
<feature type="chain" id="PRO_0000192282" description="Ribosomal protein L11 methyltransferase">
    <location>
        <begin position="1"/>
        <end position="295"/>
    </location>
</feature>
<feature type="binding site" evidence="1">
    <location>
        <position position="150"/>
    </location>
    <ligand>
        <name>S-adenosyl-L-methionine</name>
        <dbReference type="ChEBI" id="CHEBI:59789"/>
    </ligand>
</feature>
<feature type="binding site" evidence="1">
    <location>
        <position position="171"/>
    </location>
    <ligand>
        <name>S-adenosyl-L-methionine</name>
        <dbReference type="ChEBI" id="CHEBI:59789"/>
    </ligand>
</feature>
<feature type="binding site" evidence="1">
    <location>
        <position position="193"/>
    </location>
    <ligand>
        <name>S-adenosyl-L-methionine</name>
        <dbReference type="ChEBI" id="CHEBI:59789"/>
    </ligand>
</feature>
<feature type="binding site" evidence="1">
    <location>
        <position position="232"/>
    </location>
    <ligand>
        <name>S-adenosyl-L-methionine</name>
        <dbReference type="ChEBI" id="CHEBI:59789"/>
    </ligand>
</feature>
<reference key="1">
    <citation type="journal article" date="2000" name="Science">
        <title>Complete genome sequence of Neisseria meningitidis serogroup B strain MC58.</title>
        <authorList>
            <person name="Tettelin H."/>
            <person name="Saunders N.J."/>
            <person name="Heidelberg J.F."/>
            <person name="Jeffries A.C."/>
            <person name="Nelson K.E."/>
            <person name="Eisen J.A."/>
            <person name="Ketchum K.A."/>
            <person name="Hood D.W."/>
            <person name="Peden J.F."/>
            <person name="Dodson R.J."/>
            <person name="Nelson W.C."/>
            <person name="Gwinn M.L."/>
            <person name="DeBoy R.T."/>
            <person name="Peterson J.D."/>
            <person name="Hickey E.K."/>
            <person name="Haft D.H."/>
            <person name="Salzberg S.L."/>
            <person name="White O."/>
            <person name="Fleischmann R.D."/>
            <person name="Dougherty B.A."/>
            <person name="Mason T.M."/>
            <person name="Ciecko A."/>
            <person name="Parksey D.S."/>
            <person name="Blair E."/>
            <person name="Cittone H."/>
            <person name="Clark E.B."/>
            <person name="Cotton M.D."/>
            <person name="Utterback T.R."/>
            <person name="Khouri H.M."/>
            <person name="Qin H."/>
            <person name="Vamathevan J.J."/>
            <person name="Gill J."/>
            <person name="Scarlato V."/>
            <person name="Masignani V."/>
            <person name="Pizza M."/>
            <person name="Grandi G."/>
            <person name="Sun L."/>
            <person name="Smith H.O."/>
            <person name="Fraser C.M."/>
            <person name="Moxon E.R."/>
            <person name="Rappuoli R."/>
            <person name="Venter J.C."/>
        </authorList>
    </citation>
    <scope>NUCLEOTIDE SEQUENCE [LARGE SCALE GENOMIC DNA]</scope>
    <source>
        <strain>ATCC BAA-335 / MC58</strain>
    </source>
</reference>
<name>PRMA_NEIMB</name>
<accession>Q9JXW2</accession>
<keyword id="KW-0963">Cytoplasm</keyword>
<keyword id="KW-0489">Methyltransferase</keyword>
<keyword id="KW-1185">Reference proteome</keyword>
<keyword id="KW-0949">S-adenosyl-L-methionine</keyword>
<keyword id="KW-0808">Transferase</keyword>
<gene>
    <name evidence="1" type="primary">prmA</name>
    <name type="ordered locus">NMB1862</name>
</gene>